<proteinExistence type="inferred from homology"/>
<feature type="chain" id="PRO_0000083608" description="3-isopropylmalate dehydrogenase">
    <location>
        <begin position="1"/>
        <end position="382"/>
    </location>
</feature>
<feature type="binding site" evidence="1">
    <location>
        <begin position="91"/>
        <end position="102"/>
    </location>
    <ligand>
        <name>NAD(+)</name>
        <dbReference type="ChEBI" id="CHEBI:57540"/>
    </ligand>
</feature>
<feature type="binding site" evidence="1">
    <location>
        <position position="109"/>
    </location>
    <ligand>
        <name>substrate</name>
    </ligand>
</feature>
<feature type="binding site" evidence="1">
    <location>
        <position position="119"/>
    </location>
    <ligand>
        <name>substrate</name>
    </ligand>
</feature>
<feature type="binding site" evidence="1">
    <location>
        <position position="148"/>
    </location>
    <ligand>
        <name>substrate</name>
    </ligand>
</feature>
<feature type="binding site" evidence="1">
    <location>
        <position position="240"/>
    </location>
    <ligand>
        <name>Mg(2+)</name>
        <dbReference type="ChEBI" id="CHEBI:18420"/>
    </ligand>
</feature>
<feature type="binding site" evidence="1">
    <location>
        <position position="240"/>
    </location>
    <ligand>
        <name>substrate</name>
    </ligand>
</feature>
<feature type="binding site" evidence="1">
    <location>
        <position position="265"/>
    </location>
    <ligand>
        <name>Mg(2+)</name>
        <dbReference type="ChEBI" id="CHEBI:18420"/>
    </ligand>
</feature>
<feature type="binding site" evidence="1">
    <location>
        <position position="269"/>
    </location>
    <ligand>
        <name>Mg(2+)</name>
        <dbReference type="ChEBI" id="CHEBI:18420"/>
    </ligand>
</feature>
<feature type="binding site" evidence="1">
    <location>
        <begin position="304"/>
        <end position="315"/>
    </location>
    <ligand>
        <name>NAD(+)</name>
        <dbReference type="ChEBI" id="CHEBI:57540"/>
    </ligand>
</feature>
<feature type="site" description="Important for catalysis" evidence="1">
    <location>
        <position position="155"/>
    </location>
</feature>
<feature type="site" description="Important for catalysis" evidence="1">
    <location>
        <position position="207"/>
    </location>
</feature>
<sequence length="382" mass="41132">MSQPELKKSKVDISKTITVLPGDHVGEEVCNEAIKVLQAIEDATPYRNIKFNLQKHLIGGAAIDATGTPLPDESLEAAKNSDAVLLGAVGGPKWGTGSVRPEQGLLKIRKELNLYANLRPCNFASDSLLELSPLKSEIVKGTDFTVVRELVGGIYFGERQEQAESEDKQTAWDTEKYSTEEVTRITRMAAFMALQHNPPLPIWSLDKANVLASSRLWRTTVDKVMSEEFPQLTIQHQLIDSAAMILVQSPTKLNGIIITSNMFGDIISDEASVIPGSLGLLPSASLASLPDTNSAFGLYEPCHGSAPDLTENKVNPVATILSVAMMLRLSLDCVPEAEALEKAVGQVLDSGIRTGDLRGSSSTKEVGDAIAEAVKKVLNQSV</sequence>
<name>LEU3_DEBHA</name>
<evidence type="ECO:0000250" key="1"/>
<evidence type="ECO:0000305" key="2"/>
<organism>
    <name type="scientific">Debaryomyces hansenii (strain ATCC 36239 / CBS 767 / BCRC 21394 / JCM 1990 / NBRC 0083 / IGC 2968)</name>
    <name type="common">Yeast</name>
    <name type="synonym">Torulaspora hansenii</name>
    <dbReference type="NCBI Taxonomy" id="284592"/>
    <lineage>
        <taxon>Eukaryota</taxon>
        <taxon>Fungi</taxon>
        <taxon>Dikarya</taxon>
        <taxon>Ascomycota</taxon>
        <taxon>Saccharomycotina</taxon>
        <taxon>Pichiomycetes</taxon>
        <taxon>Debaryomycetaceae</taxon>
        <taxon>Debaryomyces</taxon>
    </lineage>
</organism>
<accession>Q6B458</accession>
<accession>Q6BIF1</accession>
<comment type="function">
    <text>Catalyzes the oxidation of 3-carboxy-2-hydroxy-4-methylpentanoate (3-isopropylmalate) to 3-carboxy-4-methyl-2-oxopentanoate. The product decarboxylates to 4-methyl-2 oxopentanoate.</text>
</comment>
<comment type="catalytic activity">
    <reaction>
        <text>(2R,3S)-3-isopropylmalate + NAD(+) = 4-methyl-2-oxopentanoate + CO2 + NADH</text>
        <dbReference type="Rhea" id="RHEA:32271"/>
        <dbReference type="ChEBI" id="CHEBI:16526"/>
        <dbReference type="ChEBI" id="CHEBI:17865"/>
        <dbReference type="ChEBI" id="CHEBI:35121"/>
        <dbReference type="ChEBI" id="CHEBI:57540"/>
        <dbReference type="ChEBI" id="CHEBI:57945"/>
        <dbReference type="EC" id="1.1.1.85"/>
    </reaction>
</comment>
<comment type="cofactor">
    <cofactor evidence="1">
        <name>Mg(2+)</name>
        <dbReference type="ChEBI" id="CHEBI:18420"/>
    </cofactor>
    <cofactor evidence="1">
        <name>Mn(2+)</name>
        <dbReference type="ChEBI" id="CHEBI:29035"/>
    </cofactor>
    <text evidence="1">Binds 1 Mg(2+) or Mn(2+) ion per subunit.</text>
</comment>
<comment type="pathway">
    <text>Amino-acid biosynthesis; L-leucine biosynthesis; L-leucine from 3-methyl-2-oxobutanoate: step 3/4.</text>
</comment>
<comment type="subunit">
    <text evidence="1">Homodimer.</text>
</comment>
<comment type="subcellular location">
    <subcellularLocation>
        <location>Cytoplasm</location>
    </subcellularLocation>
</comment>
<comment type="similarity">
    <text evidence="2">Belongs to the isocitrate and isopropylmalate dehydrogenases family.</text>
</comment>
<dbReference type="EC" id="1.1.1.85"/>
<dbReference type="EMBL" id="AY683206">
    <property type="protein sequence ID" value="AAT90594.1"/>
    <property type="molecule type" value="Genomic_DNA"/>
</dbReference>
<dbReference type="EMBL" id="CR382139">
    <property type="protein sequence ID" value="CAG90502.1"/>
    <property type="molecule type" value="Genomic_DNA"/>
</dbReference>
<dbReference type="RefSeq" id="XP_462020.1">
    <property type="nucleotide sequence ID" value="XM_462020.1"/>
</dbReference>
<dbReference type="SMR" id="Q6B458"/>
<dbReference type="FunCoup" id="Q6B458">
    <property type="interactions" value="967"/>
</dbReference>
<dbReference type="STRING" id="284592.Q6B458"/>
<dbReference type="GeneID" id="2904925"/>
<dbReference type="KEGG" id="dha:DEHA2G10978g"/>
<dbReference type="VEuPathDB" id="FungiDB:DEHA2G10978g"/>
<dbReference type="eggNOG" id="KOG0786">
    <property type="taxonomic scope" value="Eukaryota"/>
</dbReference>
<dbReference type="HOGENOM" id="CLU_031953_0_3_1"/>
<dbReference type="InParanoid" id="Q6B458"/>
<dbReference type="OMA" id="EYDLGAR"/>
<dbReference type="OrthoDB" id="419183at2759"/>
<dbReference type="UniPathway" id="UPA00048">
    <property type="reaction ID" value="UER00072"/>
</dbReference>
<dbReference type="Proteomes" id="UP000000599">
    <property type="component" value="Chromosome G"/>
</dbReference>
<dbReference type="GO" id="GO:0005829">
    <property type="term" value="C:cytosol"/>
    <property type="evidence" value="ECO:0007669"/>
    <property type="project" value="EnsemblFungi"/>
</dbReference>
<dbReference type="GO" id="GO:0003862">
    <property type="term" value="F:3-isopropylmalate dehydrogenase activity"/>
    <property type="evidence" value="ECO:0007669"/>
    <property type="project" value="UniProtKB-EC"/>
</dbReference>
<dbReference type="GO" id="GO:0000287">
    <property type="term" value="F:magnesium ion binding"/>
    <property type="evidence" value="ECO:0007669"/>
    <property type="project" value="InterPro"/>
</dbReference>
<dbReference type="GO" id="GO:0051287">
    <property type="term" value="F:NAD binding"/>
    <property type="evidence" value="ECO:0007669"/>
    <property type="project" value="InterPro"/>
</dbReference>
<dbReference type="GO" id="GO:0009098">
    <property type="term" value="P:L-leucine biosynthetic process"/>
    <property type="evidence" value="ECO:0007669"/>
    <property type="project" value="UniProtKB-UniPathway"/>
</dbReference>
<dbReference type="FunFam" id="3.40.718.10:FF:000006">
    <property type="entry name" value="3-isopropylmalate dehydrogenase"/>
    <property type="match status" value="1"/>
</dbReference>
<dbReference type="Gene3D" id="3.40.718.10">
    <property type="entry name" value="Isopropylmalate Dehydrogenase"/>
    <property type="match status" value="1"/>
</dbReference>
<dbReference type="InterPro" id="IPR019818">
    <property type="entry name" value="IsoCit/isopropylmalate_DH_CS"/>
</dbReference>
<dbReference type="InterPro" id="IPR024084">
    <property type="entry name" value="IsoPropMal-DH-like_dom"/>
</dbReference>
<dbReference type="InterPro" id="IPR004429">
    <property type="entry name" value="Isopropylmalate_DH"/>
</dbReference>
<dbReference type="NCBIfam" id="TIGR00169">
    <property type="entry name" value="leuB"/>
    <property type="match status" value="1"/>
</dbReference>
<dbReference type="PANTHER" id="PTHR42979">
    <property type="entry name" value="3-ISOPROPYLMALATE DEHYDROGENASE"/>
    <property type="match status" value="1"/>
</dbReference>
<dbReference type="PANTHER" id="PTHR42979:SF1">
    <property type="entry name" value="3-ISOPROPYLMALATE DEHYDROGENASE"/>
    <property type="match status" value="1"/>
</dbReference>
<dbReference type="Pfam" id="PF00180">
    <property type="entry name" value="Iso_dh"/>
    <property type="match status" value="1"/>
</dbReference>
<dbReference type="SMART" id="SM01329">
    <property type="entry name" value="Iso_dh"/>
    <property type="match status" value="1"/>
</dbReference>
<dbReference type="SUPFAM" id="SSF53659">
    <property type="entry name" value="Isocitrate/Isopropylmalate dehydrogenase-like"/>
    <property type="match status" value="1"/>
</dbReference>
<dbReference type="PROSITE" id="PS00470">
    <property type="entry name" value="IDH_IMDH"/>
    <property type="match status" value="1"/>
</dbReference>
<reference key="1">
    <citation type="submission" date="2004-07" db="EMBL/GenBank/DDBJ databases">
        <title>LEU2 homolog from the marine yeast Debaryomyces hansenii.</title>
        <authorList>
            <person name="Perez-Matos A.E."/>
            <person name="Rosado W."/>
            <person name="Arroyo N."/>
            <person name="Govind N.S."/>
        </authorList>
    </citation>
    <scope>NUCLEOTIDE SEQUENCE [GENOMIC DNA]</scope>
</reference>
<reference key="2">
    <citation type="journal article" date="2004" name="Nature">
        <title>Genome evolution in yeasts.</title>
        <authorList>
            <person name="Dujon B."/>
            <person name="Sherman D."/>
            <person name="Fischer G."/>
            <person name="Durrens P."/>
            <person name="Casaregola S."/>
            <person name="Lafontaine I."/>
            <person name="de Montigny J."/>
            <person name="Marck C."/>
            <person name="Neuveglise C."/>
            <person name="Talla E."/>
            <person name="Goffard N."/>
            <person name="Frangeul L."/>
            <person name="Aigle M."/>
            <person name="Anthouard V."/>
            <person name="Babour A."/>
            <person name="Barbe V."/>
            <person name="Barnay S."/>
            <person name="Blanchin S."/>
            <person name="Beckerich J.-M."/>
            <person name="Beyne E."/>
            <person name="Bleykasten C."/>
            <person name="Boisrame A."/>
            <person name="Boyer J."/>
            <person name="Cattolico L."/>
            <person name="Confanioleri F."/>
            <person name="de Daruvar A."/>
            <person name="Despons L."/>
            <person name="Fabre E."/>
            <person name="Fairhead C."/>
            <person name="Ferry-Dumazet H."/>
            <person name="Groppi A."/>
            <person name="Hantraye F."/>
            <person name="Hennequin C."/>
            <person name="Jauniaux N."/>
            <person name="Joyet P."/>
            <person name="Kachouri R."/>
            <person name="Kerrest A."/>
            <person name="Koszul R."/>
            <person name="Lemaire M."/>
            <person name="Lesur I."/>
            <person name="Ma L."/>
            <person name="Muller H."/>
            <person name="Nicaud J.-M."/>
            <person name="Nikolski M."/>
            <person name="Oztas S."/>
            <person name="Ozier-Kalogeropoulos O."/>
            <person name="Pellenz S."/>
            <person name="Potier S."/>
            <person name="Richard G.-F."/>
            <person name="Straub M.-L."/>
            <person name="Suleau A."/>
            <person name="Swennen D."/>
            <person name="Tekaia F."/>
            <person name="Wesolowski-Louvel M."/>
            <person name="Westhof E."/>
            <person name="Wirth B."/>
            <person name="Zeniou-Meyer M."/>
            <person name="Zivanovic Y."/>
            <person name="Bolotin-Fukuhara M."/>
            <person name="Thierry A."/>
            <person name="Bouchier C."/>
            <person name="Caudron B."/>
            <person name="Scarpelli C."/>
            <person name="Gaillardin C."/>
            <person name="Weissenbach J."/>
            <person name="Wincker P."/>
            <person name="Souciet J.-L."/>
        </authorList>
    </citation>
    <scope>NUCLEOTIDE SEQUENCE [LARGE SCALE GENOMIC DNA]</scope>
    <source>
        <strain>ATCC 36239 / CBS 767 / BCRC 21394 / JCM 1990 / NBRC 0083 / IGC 2968</strain>
    </source>
</reference>
<protein>
    <recommendedName>
        <fullName>3-isopropylmalate dehydrogenase</fullName>
        <shortName>3-IPM-DH</shortName>
        <shortName>IMDH</shortName>
        <ecNumber>1.1.1.85</ecNumber>
    </recommendedName>
    <alternativeName>
        <fullName>Beta-IPM dehydrogenase</fullName>
    </alternativeName>
</protein>
<keyword id="KW-0028">Amino-acid biosynthesis</keyword>
<keyword id="KW-0100">Branched-chain amino acid biosynthesis</keyword>
<keyword id="KW-0963">Cytoplasm</keyword>
<keyword id="KW-0432">Leucine biosynthesis</keyword>
<keyword id="KW-0460">Magnesium</keyword>
<keyword id="KW-0464">Manganese</keyword>
<keyword id="KW-0479">Metal-binding</keyword>
<keyword id="KW-0520">NAD</keyword>
<keyword id="KW-0560">Oxidoreductase</keyword>
<keyword id="KW-1185">Reference proteome</keyword>
<gene>
    <name type="primary">LEU2</name>
    <name type="ordered locus">DEHA2G10978g</name>
</gene>